<comment type="function">
    <text evidence="1">Plays a role in a RAD51/RAD54-dependent homologous recombination repair (HRR) pathway to repair MMS-induced lesions during S-phase. Required for error-free repair of spontaneous and induced DNA lesions to protect the genome from mutation (By similarity).</text>
</comment>
<comment type="subunit">
    <text evidence="1">Component of the SHU complex composed of at least CSM2, PSY3, SHU1 and SHU2.</text>
</comment>
<comment type="subcellular location">
    <subcellularLocation>
        <location evidence="1">Nucleus</location>
    </subcellularLocation>
</comment>
<comment type="similarity">
    <text evidence="2">Belongs to the SHU2 family.</text>
</comment>
<feature type="chain" id="PRO_0000409741" description="Suppressor of hydroxyurea sensitivity protein 2">
    <location>
        <begin position="1"/>
        <end position="223"/>
    </location>
</feature>
<protein>
    <recommendedName>
        <fullName>Suppressor of hydroxyurea sensitivity protein 2</fullName>
    </recommendedName>
</protein>
<sequence length="223" mass="26137">MSKDVIEYSKLFAKLVNTNDDTKLDDTIASFLYYMFPRELFIRAISLLESSDMFIYILDRVHNKEGNEHTSLIDVLVDEFYKGSSNSLLEYRLIVKDTNDGAPPILVDIAHWFCSCEEFCKYFHEALEKTDEKEELHDVLINEVDDHLQFSDDRFAQLDPHSLSKQWYFKFDKICCSHLLAFSILLRSSINVLKFFTVNSNKVFVIAIDNIDEWLNLHINIVE</sequence>
<gene>
    <name type="primary">SHU2</name>
    <name type="ORF">AWRI796_0823</name>
</gene>
<proteinExistence type="inferred from homology"/>
<evidence type="ECO:0000250" key="1"/>
<evidence type="ECO:0000305" key="2"/>
<dbReference type="EMBL" id="ADVS01000013">
    <property type="protein sequence ID" value="EGA75581.1"/>
    <property type="molecule type" value="Genomic_DNA"/>
</dbReference>
<dbReference type="SMR" id="E7KAR8"/>
<dbReference type="HOGENOM" id="CLU_1115918_0_0_1"/>
<dbReference type="OMA" id="WLKLHLN"/>
<dbReference type="OrthoDB" id="4066852at2759"/>
<dbReference type="GO" id="GO:0005634">
    <property type="term" value="C:nucleus"/>
    <property type="evidence" value="ECO:0007669"/>
    <property type="project" value="UniProtKB-SubCell"/>
</dbReference>
<dbReference type="GO" id="GO:0006310">
    <property type="term" value="P:DNA recombination"/>
    <property type="evidence" value="ECO:0007669"/>
    <property type="project" value="UniProtKB-KW"/>
</dbReference>
<dbReference type="GO" id="GO:0006281">
    <property type="term" value="P:DNA repair"/>
    <property type="evidence" value="ECO:0007669"/>
    <property type="project" value="UniProtKB-KW"/>
</dbReference>
<accession>E7KAR8</accession>
<organism>
    <name type="scientific">Saccharomyces cerevisiae (strain AWRI796)</name>
    <name type="common">Baker's yeast</name>
    <dbReference type="NCBI Taxonomy" id="764097"/>
    <lineage>
        <taxon>Eukaryota</taxon>
        <taxon>Fungi</taxon>
        <taxon>Dikarya</taxon>
        <taxon>Ascomycota</taxon>
        <taxon>Saccharomycotina</taxon>
        <taxon>Saccharomycetes</taxon>
        <taxon>Saccharomycetales</taxon>
        <taxon>Saccharomycetaceae</taxon>
        <taxon>Saccharomyces</taxon>
    </lineage>
</organism>
<keyword id="KW-0227">DNA damage</keyword>
<keyword id="KW-0233">DNA recombination</keyword>
<keyword id="KW-0234">DNA repair</keyword>
<keyword id="KW-0539">Nucleus</keyword>
<name>SHU2_YEASA</name>
<reference key="1">
    <citation type="journal article" date="2011" name="PLoS Genet.">
        <title>Whole-genome comparison reveals novel genetic elements that characterize the genome of industrial strains of Saccharomyces cerevisiae.</title>
        <authorList>
            <person name="Borneman A.R."/>
            <person name="Desany B.A."/>
            <person name="Riches D."/>
            <person name="Affourtit J.P."/>
            <person name="Forgan A.H."/>
            <person name="Pretorius I.S."/>
            <person name="Egholm M."/>
            <person name="Chambers P.J."/>
        </authorList>
    </citation>
    <scope>NUCLEOTIDE SEQUENCE [LARGE SCALE GENOMIC DNA]</scope>
    <source>
        <strain>AWRI796</strain>
    </source>
</reference>